<organism>
    <name type="scientific">Methanothermobacter thermautotrophicus (strain ATCC 29096 / DSM 1053 / JCM 10044 / NBRC 100330 / Delta H)</name>
    <name type="common">Methanobacterium thermoautotrophicum</name>
    <dbReference type="NCBI Taxonomy" id="187420"/>
    <lineage>
        <taxon>Archaea</taxon>
        <taxon>Methanobacteriati</taxon>
        <taxon>Methanobacteriota</taxon>
        <taxon>Methanomada group</taxon>
        <taxon>Methanobacteria</taxon>
        <taxon>Methanobacteriales</taxon>
        <taxon>Methanobacteriaceae</taxon>
        <taxon>Methanothermobacter</taxon>
    </lineage>
</organism>
<feature type="chain" id="PRO_0000138139" description="2,3-bisphosphoglycerate-independent phosphoglycerate mutase 1">
    <location>
        <begin position="1"/>
        <end position="409"/>
    </location>
</feature>
<feature type="region of interest" description="Disordered" evidence="2">
    <location>
        <begin position="163"/>
        <end position="184"/>
    </location>
</feature>
<feature type="compositionally biased region" description="Basic and acidic residues" evidence="2">
    <location>
        <begin position="163"/>
        <end position="173"/>
    </location>
</feature>
<accession>O27628</accession>
<reference key="1">
    <citation type="journal article" date="1997" name="J. Bacteriol.">
        <title>Complete genome sequence of Methanobacterium thermoautotrophicum deltaH: functional analysis and comparative genomics.</title>
        <authorList>
            <person name="Smith D.R."/>
            <person name="Doucette-Stamm L.A."/>
            <person name="Deloughery C."/>
            <person name="Lee H.-M."/>
            <person name="Dubois J."/>
            <person name="Aldredge T."/>
            <person name="Bashirzadeh R."/>
            <person name="Blakely D."/>
            <person name="Cook R."/>
            <person name="Gilbert K."/>
            <person name="Harrison D."/>
            <person name="Hoang L."/>
            <person name="Keagle P."/>
            <person name="Lumm W."/>
            <person name="Pothier B."/>
            <person name="Qiu D."/>
            <person name="Spadafora R."/>
            <person name="Vicare R."/>
            <person name="Wang Y."/>
            <person name="Wierzbowski J."/>
            <person name="Gibson R."/>
            <person name="Jiwani N."/>
            <person name="Caruso A."/>
            <person name="Bush D."/>
            <person name="Safer H."/>
            <person name="Patwell D."/>
            <person name="Prabhakar S."/>
            <person name="McDougall S."/>
            <person name="Shimer G."/>
            <person name="Goyal A."/>
            <person name="Pietrovski S."/>
            <person name="Church G.M."/>
            <person name="Daniels C.J."/>
            <person name="Mao J.-I."/>
            <person name="Rice P."/>
            <person name="Noelling J."/>
            <person name="Reeve J.N."/>
        </authorList>
    </citation>
    <scope>NUCLEOTIDE SEQUENCE [LARGE SCALE GENOMIC DNA]</scope>
    <source>
        <strain>ATCC 29096 / DSM 1053 / JCM 10044 / NBRC 100330 / Delta H</strain>
    </source>
</reference>
<dbReference type="EC" id="5.4.2.12"/>
<dbReference type="EMBL" id="AE000666">
    <property type="protein sequence ID" value="AAB86064.1"/>
    <property type="molecule type" value="Genomic_DNA"/>
</dbReference>
<dbReference type="PIR" id="D69079">
    <property type="entry name" value="D69079"/>
</dbReference>
<dbReference type="RefSeq" id="WP_010877199.1">
    <property type="nucleotide sequence ID" value="NC_000916.1"/>
</dbReference>
<dbReference type="SMR" id="O27628"/>
<dbReference type="FunCoup" id="O27628">
    <property type="interactions" value="142"/>
</dbReference>
<dbReference type="STRING" id="187420.MTH_1591"/>
<dbReference type="PaxDb" id="187420-MTH_1591"/>
<dbReference type="EnsemblBacteria" id="AAB86064">
    <property type="protein sequence ID" value="AAB86064"/>
    <property type="gene ID" value="MTH_1591"/>
</dbReference>
<dbReference type="GeneID" id="1471860"/>
<dbReference type="KEGG" id="mth:MTH_1591"/>
<dbReference type="PATRIC" id="fig|187420.15.peg.1554"/>
<dbReference type="HOGENOM" id="CLU_034906_2_0_2"/>
<dbReference type="InParanoid" id="O27628"/>
<dbReference type="BioCyc" id="MetaCyc:MONOMER-14536"/>
<dbReference type="UniPathway" id="UPA00109">
    <property type="reaction ID" value="UER00186"/>
</dbReference>
<dbReference type="Proteomes" id="UP000005223">
    <property type="component" value="Chromosome"/>
</dbReference>
<dbReference type="GO" id="GO:0046872">
    <property type="term" value="F:metal ion binding"/>
    <property type="evidence" value="ECO:0007669"/>
    <property type="project" value="InterPro"/>
</dbReference>
<dbReference type="GO" id="GO:0004619">
    <property type="term" value="F:phosphoglycerate mutase activity"/>
    <property type="evidence" value="ECO:0007669"/>
    <property type="project" value="UniProtKB-EC"/>
</dbReference>
<dbReference type="GO" id="GO:0006096">
    <property type="term" value="P:glycolytic process"/>
    <property type="evidence" value="ECO:0007669"/>
    <property type="project" value="UniProtKB-UniRule"/>
</dbReference>
<dbReference type="CDD" id="cd16011">
    <property type="entry name" value="iPGM_like"/>
    <property type="match status" value="1"/>
</dbReference>
<dbReference type="Gene3D" id="3.40.720.10">
    <property type="entry name" value="Alkaline Phosphatase, subunit A"/>
    <property type="match status" value="2"/>
</dbReference>
<dbReference type="Gene3D" id="3.30.70.2130">
    <property type="entry name" value="Metalloenzyme domain"/>
    <property type="match status" value="1"/>
</dbReference>
<dbReference type="HAMAP" id="MF_01402_A">
    <property type="entry name" value="ApgM_A"/>
    <property type="match status" value="1"/>
</dbReference>
<dbReference type="InterPro" id="IPR017850">
    <property type="entry name" value="Alkaline_phosphatase_core_sf"/>
</dbReference>
<dbReference type="InterPro" id="IPR023665">
    <property type="entry name" value="ApgAM_prokaryotes"/>
</dbReference>
<dbReference type="InterPro" id="IPR006124">
    <property type="entry name" value="Metalloenzyme"/>
</dbReference>
<dbReference type="InterPro" id="IPR004456">
    <property type="entry name" value="Pglycerate_mutase_ApgM"/>
</dbReference>
<dbReference type="InterPro" id="IPR042253">
    <property type="entry name" value="Pglycerate_mutase_ApgM_sf"/>
</dbReference>
<dbReference type="NCBIfam" id="TIGR00306">
    <property type="entry name" value="apgM"/>
    <property type="match status" value="1"/>
</dbReference>
<dbReference type="NCBIfam" id="NF003104">
    <property type="entry name" value="PRK04024.1"/>
    <property type="match status" value="1"/>
</dbReference>
<dbReference type="PANTHER" id="PTHR31209">
    <property type="entry name" value="COFACTOR-INDEPENDENT PHOSPHOGLYCERATE MUTASE"/>
    <property type="match status" value="1"/>
</dbReference>
<dbReference type="PANTHER" id="PTHR31209:SF0">
    <property type="entry name" value="METALLOENZYME DOMAIN-CONTAINING PROTEIN"/>
    <property type="match status" value="1"/>
</dbReference>
<dbReference type="Pfam" id="PF01676">
    <property type="entry name" value="Metalloenzyme"/>
    <property type="match status" value="1"/>
</dbReference>
<dbReference type="Pfam" id="PF10143">
    <property type="entry name" value="PhosphMutase"/>
    <property type="match status" value="1"/>
</dbReference>
<dbReference type="PIRSF" id="PIRSF006392">
    <property type="entry name" value="IPGAM_arch"/>
    <property type="match status" value="1"/>
</dbReference>
<dbReference type="SUPFAM" id="SSF53649">
    <property type="entry name" value="Alkaline phosphatase-like"/>
    <property type="match status" value="1"/>
</dbReference>
<protein>
    <recommendedName>
        <fullName>2,3-bisphosphoglycerate-independent phosphoglycerate mutase 1</fullName>
        <shortName>BPG-independent PGAM 1</shortName>
        <shortName>Phosphoglyceromutase 1</shortName>
        <shortName>aPGAM 1</shortName>
        <ecNumber>5.4.2.12</ecNumber>
    </recommendedName>
</protein>
<proteinExistence type="inferred from homology"/>
<name>APGM1_METTH</name>
<comment type="function">
    <text evidence="1">Catalyzes the interconversion of 2-phosphoglycerate and 3-phosphoglycerate.</text>
</comment>
<comment type="catalytic activity">
    <reaction>
        <text>(2R)-2-phosphoglycerate = (2R)-3-phosphoglycerate</text>
        <dbReference type="Rhea" id="RHEA:15901"/>
        <dbReference type="ChEBI" id="CHEBI:58272"/>
        <dbReference type="ChEBI" id="CHEBI:58289"/>
        <dbReference type="EC" id="5.4.2.12"/>
    </reaction>
</comment>
<comment type="pathway">
    <text>Carbohydrate degradation; glycolysis; pyruvate from D-glyceraldehyde 3-phosphate: step 3/5.</text>
</comment>
<comment type="similarity">
    <text evidence="3">Belongs to the BPG-independent phosphoglycerate mutase family. A-PGAM subfamily.</text>
</comment>
<gene>
    <name type="primary">apgM1</name>
    <name type="ordered locus">MTH_1591</name>
</gene>
<keyword id="KW-0324">Glycolysis</keyword>
<keyword id="KW-0413">Isomerase</keyword>
<keyword id="KW-1185">Reference proteome</keyword>
<evidence type="ECO:0000250" key="1"/>
<evidence type="ECO:0000256" key="2">
    <source>
        <dbReference type="SAM" id="MobiDB-lite"/>
    </source>
</evidence>
<evidence type="ECO:0000305" key="3"/>
<sequence length="409" mass="43778">MKGVIMIIDGMADRPLEKLSGRTPLEAASTPNMDRIAESGINGIMDPIKPGVRAGSDTSHLSILGYDPYRVYTGRGPFEAAGVGLDVKPGDIAFRCNFATADEDMIITDRRAGRIRSGTSSIARTINSMTIEGFEDVEIIFRESTGHRAVLVLRGPGLGDKVSDADPKVEGKPPKKIKALDGSPESRKTAEVLNRIVKESYEILRDHPVNTGRIERGEAPANIILPRGAGAVPHVEKFQERYDLKAACIAETGLIKGIGHLTGMDVIDVEGATGGIDTDLESIKNAISSAIAADYDFLLINIDGADEAGHDGDLEGKVRFIERVDSILGDLMGDDIYFILTADHSTPVSVMDHTGDPVPIAITGPEVRVDDVTSFSERAAAAGGLCRIRGSDVMDILLDLMNKKEKFGA</sequence>